<gene>
    <name evidence="1" type="primary">plsY</name>
    <name type="ordered locus">Ssed_1077</name>
</gene>
<name>PLSY_SHESH</name>
<accession>A8FS65</accession>
<protein>
    <recommendedName>
        <fullName evidence="1">Glycerol-3-phosphate acyltransferase</fullName>
    </recommendedName>
    <alternativeName>
        <fullName evidence="1">Acyl-PO4 G3P acyltransferase</fullName>
    </alternativeName>
    <alternativeName>
        <fullName evidence="1">Acyl-phosphate--glycerol-3-phosphate acyltransferase</fullName>
    </alternativeName>
    <alternativeName>
        <fullName evidence="1">G3P acyltransferase</fullName>
        <shortName evidence="1">GPAT</shortName>
        <ecNumber evidence="1">2.3.1.275</ecNumber>
    </alternativeName>
    <alternativeName>
        <fullName evidence="1">Lysophosphatidic acid synthase</fullName>
        <shortName evidence="1">LPA synthase</shortName>
    </alternativeName>
</protein>
<dbReference type="EC" id="2.3.1.275" evidence="1"/>
<dbReference type="EMBL" id="CP000821">
    <property type="protein sequence ID" value="ABV35688.1"/>
    <property type="molecule type" value="Genomic_DNA"/>
</dbReference>
<dbReference type="RefSeq" id="WP_012141424.1">
    <property type="nucleotide sequence ID" value="NC_009831.1"/>
</dbReference>
<dbReference type="SMR" id="A8FS65"/>
<dbReference type="STRING" id="425104.Ssed_1077"/>
<dbReference type="KEGG" id="sse:Ssed_1077"/>
<dbReference type="eggNOG" id="COG0344">
    <property type="taxonomic scope" value="Bacteria"/>
</dbReference>
<dbReference type="HOGENOM" id="CLU_081254_0_0_6"/>
<dbReference type="OrthoDB" id="9777124at2"/>
<dbReference type="UniPathway" id="UPA00085"/>
<dbReference type="Proteomes" id="UP000002015">
    <property type="component" value="Chromosome"/>
</dbReference>
<dbReference type="GO" id="GO:0005886">
    <property type="term" value="C:plasma membrane"/>
    <property type="evidence" value="ECO:0007669"/>
    <property type="project" value="UniProtKB-SubCell"/>
</dbReference>
<dbReference type="GO" id="GO:0043772">
    <property type="term" value="F:acyl-phosphate glycerol-3-phosphate acyltransferase activity"/>
    <property type="evidence" value="ECO:0007669"/>
    <property type="project" value="UniProtKB-UniRule"/>
</dbReference>
<dbReference type="GO" id="GO:0008654">
    <property type="term" value="P:phospholipid biosynthetic process"/>
    <property type="evidence" value="ECO:0007669"/>
    <property type="project" value="UniProtKB-UniRule"/>
</dbReference>
<dbReference type="HAMAP" id="MF_01043">
    <property type="entry name" value="PlsY"/>
    <property type="match status" value="1"/>
</dbReference>
<dbReference type="InterPro" id="IPR003811">
    <property type="entry name" value="G3P_acylTferase_PlsY"/>
</dbReference>
<dbReference type="NCBIfam" id="TIGR00023">
    <property type="entry name" value="glycerol-3-phosphate 1-O-acyltransferase PlsY"/>
    <property type="match status" value="1"/>
</dbReference>
<dbReference type="PANTHER" id="PTHR30309:SF0">
    <property type="entry name" value="GLYCEROL-3-PHOSPHATE ACYLTRANSFERASE-RELATED"/>
    <property type="match status" value="1"/>
</dbReference>
<dbReference type="PANTHER" id="PTHR30309">
    <property type="entry name" value="INNER MEMBRANE PROTEIN YGIH"/>
    <property type="match status" value="1"/>
</dbReference>
<dbReference type="Pfam" id="PF02660">
    <property type="entry name" value="G3P_acyltransf"/>
    <property type="match status" value="1"/>
</dbReference>
<dbReference type="SMART" id="SM01207">
    <property type="entry name" value="G3P_acyltransf"/>
    <property type="match status" value="1"/>
</dbReference>
<feature type="chain" id="PRO_1000084396" description="Glycerol-3-phosphate acyltransferase">
    <location>
        <begin position="1"/>
        <end position="200"/>
    </location>
</feature>
<feature type="transmembrane region" description="Helical" evidence="1">
    <location>
        <begin position="6"/>
        <end position="26"/>
    </location>
</feature>
<feature type="transmembrane region" description="Helical" evidence="1">
    <location>
        <begin position="56"/>
        <end position="76"/>
    </location>
</feature>
<feature type="transmembrane region" description="Helical" evidence="1">
    <location>
        <begin position="82"/>
        <end position="102"/>
    </location>
</feature>
<feature type="transmembrane region" description="Helical" evidence="1">
    <location>
        <begin position="118"/>
        <end position="138"/>
    </location>
</feature>
<feature type="transmembrane region" description="Helical" evidence="1">
    <location>
        <begin position="141"/>
        <end position="161"/>
    </location>
</feature>
<reference key="1">
    <citation type="submission" date="2007-08" db="EMBL/GenBank/DDBJ databases">
        <title>Complete sequence of Shewanella sediminis HAW-EB3.</title>
        <authorList>
            <consortium name="US DOE Joint Genome Institute"/>
            <person name="Copeland A."/>
            <person name="Lucas S."/>
            <person name="Lapidus A."/>
            <person name="Barry K."/>
            <person name="Glavina del Rio T."/>
            <person name="Dalin E."/>
            <person name="Tice H."/>
            <person name="Pitluck S."/>
            <person name="Chertkov O."/>
            <person name="Brettin T."/>
            <person name="Bruce D."/>
            <person name="Detter J.C."/>
            <person name="Han C."/>
            <person name="Schmutz J."/>
            <person name="Larimer F."/>
            <person name="Land M."/>
            <person name="Hauser L."/>
            <person name="Kyrpides N."/>
            <person name="Kim E."/>
            <person name="Zhao J.-S."/>
            <person name="Richardson P."/>
        </authorList>
    </citation>
    <scope>NUCLEOTIDE SEQUENCE [LARGE SCALE GENOMIC DNA]</scope>
    <source>
        <strain>HAW-EB3</strain>
    </source>
</reference>
<proteinExistence type="inferred from homology"/>
<organism>
    <name type="scientific">Shewanella sediminis (strain HAW-EB3)</name>
    <dbReference type="NCBI Taxonomy" id="425104"/>
    <lineage>
        <taxon>Bacteria</taxon>
        <taxon>Pseudomonadati</taxon>
        <taxon>Pseudomonadota</taxon>
        <taxon>Gammaproteobacteria</taxon>
        <taxon>Alteromonadales</taxon>
        <taxon>Shewanellaceae</taxon>
        <taxon>Shewanella</taxon>
    </lineage>
</organism>
<sequence length="200" mass="21263">MTITTLTLGMILAAYLAGSISSAVLVCRLRGLPDPRTAGSGNPGATNVLRIGGASSAAMVLFFDMLKGALPAYIAFRLGIDQVALGAIAIAACLGHIFPIFFKFKGGKGVATAFGAMAPIGHELALALMVTWIVMVLISRYSSLAAITTAMLAPIYTWFLDERFTIPVAMLSTLIVIRHRDNIHRLLKGEESKVSRKKKG</sequence>
<keyword id="KW-0997">Cell inner membrane</keyword>
<keyword id="KW-1003">Cell membrane</keyword>
<keyword id="KW-0444">Lipid biosynthesis</keyword>
<keyword id="KW-0443">Lipid metabolism</keyword>
<keyword id="KW-0472">Membrane</keyword>
<keyword id="KW-0594">Phospholipid biosynthesis</keyword>
<keyword id="KW-1208">Phospholipid metabolism</keyword>
<keyword id="KW-1185">Reference proteome</keyword>
<keyword id="KW-0808">Transferase</keyword>
<keyword id="KW-0812">Transmembrane</keyword>
<keyword id="KW-1133">Transmembrane helix</keyword>
<evidence type="ECO:0000255" key="1">
    <source>
        <dbReference type="HAMAP-Rule" id="MF_01043"/>
    </source>
</evidence>
<comment type="function">
    <text evidence="1">Catalyzes the transfer of an acyl group from acyl-phosphate (acyl-PO(4)) to glycerol-3-phosphate (G3P) to form lysophosphatidic acid (LPA). This enzyme utilizes acyl-phosphate as fatty acyl donor, but not acyl-CoA or acyl-ACP.</text>
</comment>
<comment type="catalytic activity">
    <reaction evidence="1">
        <text>an acyl phosphate + sn-glycerol 3-phosphate = a 1-acyl-sn-glycero-3-phosphate + phosphate</text>
        <dbReference type="Rhea" id="RHEA:34075"/>
        <dbReference type="ChEBI" id="CHEBI:43474"/>
        <dbReference type="ChEBI" id="CHEBI:57597"/>
        <dbReference type="ChEBI" id="CHEBI:57970"/>
        <dbReference type="ChEBI" id="CHEBI:59918"/>
        <dbReference type="EC" id="2.3.1.275"/>
    </reaction>
</comment>
<comment type="pathway">
    <text evidence="1">Lipid metabolism; phospholipid metabolism.</text>
</comment>
<comment type="subunit">
    <text evidence="1">Probably interacts with PlsX.</text>
</comment>
<comment type="subcellular location">
    <subcellularLocation>
        <location evidence="1">Cell inner membrane</location>
        <topology evidence="1">Multi-pass membrane protein</topology>
    </subcellularLocation>
</comment>
<comment type="similarity">
    <text evidence="1">Belongs to the PlsY family.</text>
</comment>